<organism>
    <name type="scientific">Taenia solium</name>
    <name type="common">Pork tapeworm</name>
    <dbReference type="NCBI Taxonomy" id="6204"/>
    <lineage>
        <taxon>Eukaryota</taxon>
        <taxon>Metazoa</taxon>
        <taxon>Spiralia</taxon>
        <taxon>Lophotrochozoa</taxon>
        <taxon>Platyhelminthes</taxon>
        <taxon>Cestoda</taxon>
        <taxon>Eucestoda</taxon>
        <taxon>Cyclophyllidea</taxon>
        <taxon>Taeniidae</taxon>
        <taxon>Taenia</taxon>
    </lineage>
</organism>
<reference key="1">
    <citation type="journal article" date="2002" name="Mol. Biochem. Parasitol.">
        <title>Characterization of a spliced leader gene and of trans-spliced mRNAs from Taenia solium.</title>
        <authorList>
            <person name="Brehm K."/>
            <person name="Hubert K."/>
            <person name="Sciutto E."/>
            <person name="Garate T."/>
            <person name="Frosch M."/>
        </authorList>
    </citation>
    <scope>NUCLEOTIDE SEQUENCE [MRNA]</scope>
</reference>
<keyword id="KW-0010">Activator</keyword>
<keyword id="KW-0539">Nucleus</keyword>
<keyword id="KW-0804">Transcription</keyword>
<keyword id="KW-0805">Transcription regulation</keyword>
<proteinExistence type="evidence at transcript level"/>
<dbReference type="EMBL" id="AJ428473">
    <property type="protein sequence ID" value="CAD21541.1"/>
    <property type="molecule type" value="mRNA"/>
</dbReference>
<dbReference type="SMR" id="Q8MPD6"/>
<dbReference type="GO" id="GO:0016592">
    <property type="term" value="C:mediator complex"/>
    <property type="evidence" value="ECO:0007669"/>
    <property type="project" value="InterPro"/>
</dbReference>
<dbReference type="GO" id="GO:0003712">
    <property type="term" value="F:transcription coregulator activity"/>
    <property type="evidence" value="ECO:0007669"/>
    <property type="project" value="InterPro"/>
</dbReference>
<dbReference type="GO" id="GO:0006355">
    <property type="term" value="P:regulation of DNA-templated transcription"/>
    <property type="evidence" value="ECO:0007669"/>
    <property type="project" value="InterPro"/>
</dbReference>
<dbReference type="FunFam" id="1.10.10.1340:FF:000001">
    <property type="entry name" value="Mediator of RNA polymerase II transcription subunit 31"/>
    <property type="match status" value="1"/>
</dbReference>
<dbReference type="Gene3D" id="1.10.10.1340">
    <property type="entry name" value="Mediator of RNA polymerase II, submodule Med31 (Soh1)"/>
    <property type="match status" value="1"/>
</dbReference>
<dbReference type="InterPro" id="IPR038089">
    <property type="entry name" value="Med31_sf"/>
</dbReference>
<dbReference type="InterPro" id="IPR008831">
    <property type="entry name" value="Mediator_Med31"/>
</dbReference>
<dbReference type="PANTHER" id="PTHR13186">
    <property type="entry name" value="MEDIATOR OF RNA POLYMERASE II TRANSCRIPTION SUBUNIT 31"/>
    <property type="match status" value="1"/>
</dbReference>
<dbReference type="Pfam" id="PF05669">
    <property type="entry name" value="Med31"/>
    <property type="match status" value="1"/>
</dbReference>
<sequence>MQNRPKSVLTPARLGTSGVVRNTLEDPWVRFQIELEFVQSLGNPDYLTFLAQQGCFDKPEFINYLSYLQYWKSPSYSRFITYPFCLHMLDLLQSPDFRREVAHESVTRFIDDQMLLHWKNYLRKRAEMVNKHVQSLDAMATPGPGPSS</sequence>
<evidence type="ECO:0000250" key="1"/>
<evidence type="ECO:0000305" key="2"/>
<protein>
    <recommendedName>
        <fullName>Mediator of RNA polymerase II transcription subunit 31</fullName>
    </recommendedName>
    <alternativeName>
        <fullName>Mediator complex subunit 31</fullName>
    </alternativeName>
</protein>
<comment type="function">
    <text evidence="1">Component of the Mediator complex, a coactivator involved in the regulated transcription of nearly all RNA polymerase II-dependent genes. Mediator functions as a bridge to convey information from gene-specific regulatory proteins to the basal RNA polymerase II transcription machinery. Mediator is recruited to promoters by direct interactions with regulatory proteins and serves as a scaffold for the assembly of a functional preinitiation complex with RNA polymerase II and the general transcription factors (By similarity).</text>
</comment>
<comment type="subunit">
    <text evidence="1">Component of the Mediator complex.</text>
</comment>
<comment type="subcellular location">
    <subcellularLocation>
        <location evidence="2">Nucleus</location>
    </subcellularLocation>
</comment>
<comment type="similarity">
    <text evidence="2">Belongs to the Mediator complex subunit 31 family.</text>
</comment>
<feature type="chain" id="PRO_0000212531" description="Mediator of RNA polymerase II transcription subunit 31">
    <location>
        <begin position="1"/>
        <end position="148"/>
    </location>
</feature>
<name>MED31_TAESO</name>
<gene>
    <name type="ORF">Ts24233</name>
</gene>
<accession>Q8MPD6</accession>